<evidence type="ECO:0000255" key="1">
    <source>
        <dbReference type="HAMAP-Rule" id="MF_00535"/>
    </source>
</evidence>
<keyword id="KW-0456">Lyase</keyword>
<keyword id="KW-1185">Reference proteome</keyword>
<proteinExistence type="inferred from homology"/>
<protein>
    <recommendedName>
        <fullName evidence="1">Cyanate hydratase</fullName>
        <shortName evidence="1">Cyanase</shortName>
        <ecNumber evidence="1">4.2.1.104</ecNumber>
    </recommendedName>
    <alternativeName>
        <fullName evidence="1">Cyanate hydrolase</fullName>
    </alternativeName>
    <alternativeName>
        <fullName evidence="1">Cyanate lyase</fullName>
    </alternativeName>
</protein>
<name>CYNS_PHOLL</name>
<feature type="chain" id="PRO_0000187526" description="Cyanate hydratase">
    <location>
        <begin position="1"/>
        <end position="156"/>
    </location>
</feature>
<feature type="active site" evidence="1">
    <location>
        <position position="96"/>
    </location>
</feature>
<feature type="active site" evidence="1">
    <location>
        <position position="99"/>
    </location>
</feature>
<feature type="active site" evidence="1">
    <location>
        <position position="122"/>
    </location>
</feature>
<sequence length="156" mass="17009">MTQSQYSQTPRLALTDAIIDAKARKNLTFEDIAQGTGLSLAFVTAALLGQHPLPADAARVVVDRLELEEDAFFLLQTIPVRGSIPGGIPTDPTIYRFYEMVQVYGSTLKALVHEQFGDGIISAIDFKLDIKKVDDPNGGSRAVITLDGKYLPTKPF</sequence>
<reference key="1">
    <citation type="journal article" date="2003" name="Nat. Biotechnol.">
        <title>The genome sequence of the entomopathogenic bacterium Photorhabdus luminescens.</title>
        <authorList>
            <person name="Duchaud E."/>
            <person name="Rusniok C."/>
            <person name="Frangeul L."/>
            <person name="Buchrieser C."/>
            <person name="Givaudan A."/>
            <person name="Taourit S."/>
            <person name="Bocs S."/>
            <person name="Boursaux-Eude C."/>
            <person name="Chandler M."/>
            <person name="Charles J.-F."/>
            <person name="Dassa E."/>
            <person name="Derose R."/>
            <person name="Derzelle S."/>
            <person name="Freyssinet G."/>
            <person name="Gaudriault S."/>
            <person name="Medigue C."/>
            <person name="Lanois A."/>
            <person name="Powell K."/>
            <person name="Siguier P."/>
            <person name="Vincent R."/>
            <person name="Wingate V."/>
            <person name="Zouine M."/>
            <person name="Glaser P."/>
            <person name="Boemare N."/>
            <person name="Danchin A."/>
            <person name="Kunst F."/>
        </authorList>
    </citation>
    <scope>NUCLEOTIDE SEQUENCE [LARGE SCALE GENOMIC DNA]</scope>
    <source>
        <strain>DSM 15139 / CIP 105565 / TT01</strain>
    </source>
</reference>
<dbReference type="EC" id="4.2.1.104" evidence="1"/>
<dbReference type="EMBL" id="BX571859">
    <property type="protein sequence ID" value="CAE12407.1"/>
    <property type="molecule type" value="Genomic_DNA"/>
</dbReference>
<dbReference type="RefSeq" id="WP_011144518.1">
    <property type="nucleotide sequence ID" value="NC_005126.1"/>
</dbReference>
<dbReference type="SMR" id="Q7NA33"/>
<dbReference type="STRING" id="243265.plu0112"/>
<dbReference type="GeneID" id="48846413"/>
<dbReference type="KEGG" id="plu:plu0112"/>
<dbReference type="eggNOG" id="COG1513">
    <property type="taxonomic scope" value="Bacteria"/>
</dbReference>
<dbReference type="HOGENOM" id="CLU_103452_1_1_6"/>
<dbReference type="OrthoDB" id="9785870at2"/>
<dbReference type="Proteomes" id="UP000002514">
    <property type="component" value="Chromosome"/>
</dbReference>
<dbReference type="GO" id="GO:0008824">
    <property type="term" value="F:cyanate hydratase activity"/>
    <property type="evidence" value="ECO:0007669"/>
    <property type="project" value="UniProtKB-UniRule"/>
</dbReference>
<dbReference type="GO" id="GO:0003677">
    <property type="term" value="F:DNA binding"/>
    <property type="evidence" value="ECO:0007669"/>
    <property type="project" value="InterPro"/>
</dbReference>
<dbReference type="GO" id="GO:0009439">
    <property type="term" value="P:cyanate metabolic process"/>
    <property type="evidence" value="ECO:0007669"/>
    <property type="project" value="UniProtKB-UniRule"/>
</dbReference>
<dbReference type="CDD" id="cd00559">
    <property type="entry name" value="Cyanase_C"/>
    <property type="match status" value="1"/>
</dbReference>
<dbReference type="Gene3D" id="3.30.1160.10">
    <property type="entry name" value="Cyanate lyase, C-terminal domain"/>
    <property type="match status" value="1"/>
</dbReference>
<dbReference type="Gene3D" id="1.10.260.40">
    <property type="entry name" value="lambda repressor-like DNA-binding domains"/>
    <property type="match status" value="1"/>
</dbReference>
<dbReference type="HAMAP" id="MF_00535">
    <property type="entry name" value="Cyanate_hydrat"/>
    <property type="match status" value="1"/>
</dbReference>
<dbReference type="InterPro" id="IPR008076">
    <property type="entry name" value="Cyanase"/>
</dbReference>
<dbReference type="InterPro" id="IPR003712">
    <property type="entry name" value="Cyanate_lyase_C"/>
</dbReference>
<dbReference type="InterPro" id="IPR036581">
    <property type="entry name" value="Cyanate_lyase_C_sf"/>
</dbReference>
<dbReference type="InterPro" id="IPR048564">
    <property type="entry name" value="CYNS_N"/>
</dbReference>
<dbReference type="InterPro" id="IPR010982">
    <property type="entry name" value="Lambda_DNA-bd_dom_sf"/>
</dbReference>
<dbReference type="NCBIfam" id="TIGR00673">
    <property type="entry name" value="cynS"/>
    <property type="match status" value="1"/>
</dbReference>
<dbReference type="NCBIfam" id="NF002773">
    <property type="entry name" value="PRK02866.1"/>
    <property type="match status" value="1"/>
</dbReference>
<dbReference type="PANTHER" id="PTHR34186">
    <property type="entry name" value="CYANATE HYDRATASE"/>
    <property type="match status" value="1"/>
</dbReference>
<dbReference type="PANTHER" id="PTHR34186:SF2">
    <property type="entry name" value="CYANATE HYDRATASE"/>
    <property type="match status" value="1"/>
</dbReference>
<dbReference type="Pfam" id="PF02560">
    <property type="entry name" value="Cyanate_lyase"/>
    <property type="match status" value="1"/>
</dbReference>
<dbReference type="Pfam" id="PF21291">
    <property type="entry name" value="CYNS_N"/>
    <property type="match status" value="1"/>
</dbReference>
<dbReference type="PIRSF" id="PIRSF001263">
    <property type="entry name" value="Cyanate_hydratas"/>
    <property type="match status" value="1"/>
</dbReference>
<dbReference type="PRINTS" id="PR01693">
    <property type="entry name" value="CYANASE"/>
</dbReference>
<dbReference type="SMART" id="SM01116">
    <property type="entry name" value="Cyanate_lyase"/>
    <property type="match status" value="1"/>
</dbReference>
<dbReference type="SUPFAM" id="SSF55234">
    <property type="entry name" value="Cyanase C-terminal domain"/>
    <property type="match status" value="1"/>
</dbReference>
<dbReference type="SUPFAM" id="SSF47413">
    <property type="entry name" value="lambda repressor-like DNA-binding domains"/>
    <property type="match status" value="1"/>
</dbReference>
<organism>
    <name type="scientific">Photorhabdus laumondii subsp. laumondii (strain DSM 15139 / CIP 105565 / TT01)</name>
    <name type="common">Photorhabdus luminescens subsp. laumondii</name>
    <dbReference type="NCBI Taxonomy" id="243265"/>
    <lineage>
        <taxon>Bacteria</taxon>
        <taxon>Pseudomonadati</taxon>
        <taxon>Pseudomonadota</taxon>
        <taxon>Gammaproteobacteria</taxon>
        <taxon>Enterobacterales</taxon>
        <taxon>Morganellaceae</taxon>
        <taxon>Photorhabdus</taxon>
    </lineage>
</organism>
<gene>
    <name evidence="1" type="primary">cynS</name>
    <name type="ordered locus">plu0112</name>
</gene>
<accession>Q7NA33</accession>
<comment type="function">
    <text evidence="1">Catalyzes the reaction of cyanate with bicarbonate to produce ammonia and carbon dioxide.</text>
</comment>
<comment type="catalytic activity">
    <reaction evidence="1">
        <text>cyanate + hydrogencarbonate + 3 H(+) = NH4(+) + 2 CO2</text>
        <dbReference type="Rhea" id="RHEA:11120"/>
        <dbReference type="ChEBI" id="CHEBI:15378"/>
        <dbReference type="ChEBI" id="CHEBI:16526"/>
        <dbReference type="ChEBI" id="CHEBI:17544"/>
        <dbReference type="ChEBI" id="CHEBI:28938"/>
        <dbReference type="ChEBI" id="CHEBI:29195"/>
        <dbReference type="EC" id="4.2.1.104"/>
    </reaction>
</comment>
<comment type="similarity">
    <text evidence="1">Belongs to the cyanase family.</text>
</comment>